<feature type="chain" id="PRO_0000113755" description="Protein GrpE">
    <location>
        <begin position="1"/>
        <end position="226"/>
    </location>
</feature>
<feature type="region of interest" description="Disordered" evidence="2">
    <location>
        <begin position="1"/>
        <end position="24"/>
    </location>
</feature>
<feature type="region of interest" description="Disordered" evidence="2">
    <location>
        <begin position="205"/>
        <end position="226"/>
    </location>
</feature>
<feature type="compositionally biased region" description="Polar residues" evidence="2">
    <location>
        <begin position="217"/>
        <end position="226"/>
    </location>
</feature>
<comment type="function">
    <text evidence="1">Participates actively in the response to hyperosmotic and heat shock by preventing the aggregation of stress-denatured proteins, in association with DnaK and GrpE. It is the nucleotide exchange factor for DnaK and may function as a thermosensor. Unfolded proteins bind initially to DnaJ; upon interaction with the DnaJ-bound protein, DnaK hydrolyzes its bound ATP, resulting in the formation of a stable complex. GrpE releases ADP from DnaK; ATP binding to DnaK triggers the release of the substrate protein, thus completing the reaction cycle. Several rounds of ATP-dependent interactions between DnaJ, DnaK and GrpE are required for fully efficient folding.</text>
</comment>
<comment type="subunit">
    <text evidence="1">Homodimer.</text>
</comment>
<comment type="subcellular location">
    <subcellularLocation>
        <location evidence="1">Cytoplasm</location>
    </subcellularLocation>
</comment>
<comment type="similarity">
    <text evidence="1">Belongs to the GrpE family.</text>
</comment>
<comment type="sequence caution" evidence="3">
    <conflict type="erroneous initiation">
        <sequence resource="EMBL-CDS" id="AAL52958"/>
    </conflict>
</comment>
<accession>Q8YEV0</accession>
<protein>
    <recommendedName>
        <fullName evidence="1">Protein GrpE</fullName>
    </recommendedName>
    <alternativeName>
        <fullName evidence="1">HSP-70 cofactor</fullName>
    </alternativeName>
</protein>
<evidence type="ECO:0000255" key="1">
    <source>
        <dbReference type="HAMAP-Rule" id="MF_01151"/>
    </source>
</evidence>
<evidence type="ECO:0000256" key="2">
    <source>
        <dbReference type="SAM" id="MobiDB-lite"/>
    </source>
</evidence>
<evidence type="ECO:0000305" key="3"/>
<organism>
    <name type="scientific">Brucella melitensis biotype 1 (strain ATCC 23456 / CCUG 17765 / NCTC 10094 / 16M)</name>
    <dbReference type="NCBI Taxonomy" id="224914"/>
    <lineage>
        <taxon>Bacteria</taxon>
        <taxon>Pseudomonadati</taxon>
        <taxon>Pseudomonadota</taxon>
        <taxon>Alphaproteobacteria</taxon>
        <taxon>Hyphomicrobiales</taxon>
        <taxon>Brucellaceae</taxon>
        <taxon>Brucella/Ochrobactrum group</taxon>
        <taxon>Brucella</taxon>
    </lineage>
</organism>
<gene>
    <name evidence="1" type="primary">grpE</name>
    <name type="ordered locus">BMEI1777</name>
</gene>
<sequence length="226" mass="24883">MADEKNKPENPDLDQRDINNPRDREALKQAADDFLKARRAEAAADEAEGEVDETANRIAVLEADNTELKDQMLRVAAEMENLRKRTQRDVQDARAYAITNFARDMLSVSDNLRRALDAIPADALEADSNLKSLSEGVEMTERAMLLALERHGVKKLEPEGQKFDPNFHQAMFEVPNPDLPNNTVVQVVQAGYAIGDRVLRPAMVGVSKGGPKVSAENGASTSEDNA</sequence>
<keyword id="KW-0143">Chaperone</keyword>
<keyword id="KW-0963">Cytoplasm</keyword>
<keyword id="KW-0346">Stress response</keyword>
<name>GRPE_BRUME</name>
<dbReference type="EMBL" id="AE008917">
    <property type="protein sequence ID" value="AAL52958.1"/>
    <property type="status" value="ALT_INIT"/>
    <property type="molecule type" value="Genomic_DNA"/>
</dbReference>
<dbReference type="PIR" id="AC3474">
    <property type="entry name" value="AC3474"/>
</dbReference>
<dbReference type="RefSeq" id="WP_002965419.1">
    <property type="nucleotide sequence ID" value="NZ_GG703778.1"/>
</dbReference>
<dbReference type="SMR" id="Q8YEV0"/>
<dbReference type="GeneID" id="93017362"/>
<dbReference type="KEGG" id="bme:BMEI1777"/>
<dbReference type="KEGG" id="bmel:DK63_1708"/>
<dbReference type="PATRIC" id="fig|224914.52.peg.1805"/>
<dbReference type="eggNOG" id="COG0576">
    <property type="taxonomic scope" value="Bacteria"/>
</dbReference>
<dbReference type="PhylomeDB" id="Q8YEV0"/>
<dbReference type="Proteomes" id="UP000000419">
    <property type="component" value="Chromosome I"/>
</dbReference>
<dbReference type="GO" id="GO:0005737">
    <property type="term" value="C:cytoplasm"/>
    <property type="evidence" value="ECO:0007669"/>
    <property type="project" value="UniProtKB-SubCell"/>
</dbReference>
<dbReference type="GO" id="GO:0000774">
    <property type="term" value="F:adenyl-nucleotide exchange factor activity"/>
    <property type="evidence" value="ECO:0007669"/>
    <property type="project" value="InterPro"/>
</dbReference>
<dbReference type="GO" id="GO:0042803">
    <property type="term" value="F:protein homodimerization activity"/>
    <property type="evidence" value="ECO:0007669"/>
    <property type="project" value="InterPro"/>
</dbReference>
<dbReference type="GO" id="GO:0051087">
    <property type="term" value="F:protein-folding chaperone binding"/>
    <property type="evidence" value="ECO:0007669"/>
    <property type="project" value="InterPro"/>
</dbReference>
<dbReference type="GO" id="GO:0051082">
    <property type="term" value="F:unfolded protein binding"/>
    <property type="evidence" value="ECO:0007669"/>
    <property type="project" value="TreeGrafter"/>
</dbReference>
<dbReference type="GO" id="GO:0006457">
    <property type="term" value="P:protein folding"/>
    <property type="evidence" value="ECO:0007669"/>
    <property type="project" value="InterPro"/>
</dbReference>
<dbReference type="CDD" id="cd00446">
    <property type="entry name" value="GrpE"/>
    <property type="match status" value="1"/>
</dbReference>
<dbReference type="FunFam" id="2.30.22.10:FF:000001">
    <property type="entry name" value="Protein GrpE"/>
    <property type="match status" value="1"/>
</dbReference>
<dbReference type="Gene3D" id="3.90.20.20">
    <property type="match status" value="1"/>
</dbReference>
<dbReference type="Gene3D" id="2.30.22.10">
    <property type="entry name" value="Head domain of nucleotide exchange factor GrpE"/>
    <property type="match status" value="1"/>
</dbReference>
<dbReference type="HAMAP" id="MF_01151">
    <property type="entry name" value="GrpE"/>
    <property type="match status" value="1"/>
</dbReference>
<dbReference type="InterPro" id="IPR000740">
    <property type="entry name" value="GrpE"/>
</dbReference>
<dbReference type="InterPro" id="IPR013805">
    <property type="entry name" value="GrpE_coiled_coil"/>
</dbReference>
<dbReference type="InterPro" id="IPR009012">
    <property type="entry name" value="GrpE_head"/>
</dbReference>
<dbReference type="NCBIfam" id="NF010737">
    <property type="entry name" value="PRK14139.1"/>
    <property type="match status" value="1"/>
</dbReference>
<dbReference type="NCBIfam" id="NF010738">
    <property type="entry name" value="PRK14140.1"/>
    <property type="match status" value="1"/>
</dbReference>
<dbReference type="NCBIfam" id="NF010739">
    <property type="entry name" value="PRK14141.1"/>
    <property type="match status" value="1"/>
</dbReference>
<dbReference type="NCBIfam" id="NF010748">
    <property type="entry name" value="PRK14150.1"/>
    <property type="match status" value="1"/>
</dbReference>
<dbReference type="PANTHER" id="PTHR21237">
    <property type="entry name" value="GRPE PROTEIN"/>
    <property type="match status" value="1"/>
</dbReference>
<dbReference type="PANTHER" id="PTHR21237:SF23">
    <property type="entry name" value="GRPE PROTEIN HOMOLOG, MITOCHONDRIAL"/>
    <property type="match status" value="1"/>
</dbReference>
<dbReference type="Pfam" id="PF01025">
    <property type="entry name" value="GrpE"/>
    <property type="match status" value="1"/>
</dbReference>
<dbReference type="PRINTS" id="PR00773">
    <property type="entry name" value="GRPEPROTEIN"/>
</dbReference>
<dbReference type="SUPFAM" id="SSF58014">
    <property type="entry name" value="Coiled-coil domain of nucleotide exchange factor GrpE"/>
    <property type="match status" value="1"/>
</dbReference>
<dbReference type="SUPFAM" id="SSF51064">
    <property type="entry name" value="Head domain of nucleotide exchange factor GrpE"/>
    <property type="match status" value="1"/>
</dbReference>
<dbReference type="PROSITE" id="PS01071">
    <property type="entry name" value="GRPE"/>
    <property type="match status" value="1"/>
</dbReference>
<reference key="1">
    <citation type="journal article" date="2002" name="Proc. Natl. Acad. Sci. U.S.A.">
        <title>The genome sequence of the facultative intracellular pathogen Brucella melitensis.</title>
        <authorList>
            <person name="DelVecchio V.G."/>
            <person name="Kapatral V."/>
            <person name="Redkar R.J."/>
            <person name="Patra G."/>
            <person name="Mujer C."/>
            <person name="Los T."/>
            <person name="Ivanova N."/>
            <person name="Anderson I."/>
            <person name="Bhattacharyya A."/>
            <person name="Lykidis A."/>
            <person name="Reznik G."/>
            <person name="Jablonski L."/>
            <person name="Larsen N."/>
            <person name="D'Souza M."/>
            <person name="Bernal A."/>
            <person name="Mazur M."/>
            <person name="Goltsman E."/>
            <person name="Selkov E."/>
            <person name="Elzer P.H."/>
            <person name="Hagius S."/>
            <person name="O'Callaghan D."/>
            <person name="Letesson J.-J."/>
            <person name="Haselkorn R."/>
            <person name="Kyrpides N.C."/>
            <person name="Overbeek R."/>
        </authorList>
    </citation>
    <scope>NUCLEOTIDE SEQUENCE [LARGE SCALE GENOMIC DNA]</scope>
    <source>
        <strain>ATCC 23456 / CCUG 17765 / NCTC 10094 / 16M</strain>
    </source>
</reference>
<proteinExistence type="inferred from homology"/>